<name>METN1_BACCZ</name>
<sequence>MIELKNVSKVFTTKKGNVEALKSTSLQVKKGEVFGIIGYSGAGKSTLIRCVNLLEKPTTGNIIVNEQDLTTLSTKELAKARQKIGMIFQGFNLLKTVTVYENIALPLRLAGVPKLEIEKRVEKYLRIVDLFNRKDAYPSELSGGQKQRVAIARALSHEPEVLLSDEATSALDPETTDSILDLLLKINEEIGITILLITHEMNVIQRICDRVAVMEHGAVIESGTVKEIFTNPQHVTTKKFVNSAFAAKIPAEVQKELQRTGEIVTLSFIGNSSGEPALAIATKRFQVYPNILSGNITQLKHEAYGKLVIHMQGEKNEVDRALSFLQEQGIIVEGGRTDYGKQVLFG</sequence>
<proteinExistence type="inferred from homology"/>
<protein>
    <recommendedName>
        <fullName evidence="1">Methionine import ATP-binding protein MetN 1</fullName>
        <ecNumber evidence="1">7.4.2.11</ecNumber>
    </recommendedName>
</protein>
<organism>
    <name type="scientific">Bacillus cereus (strain ZK / E33L)</name>
    <dbReference type="NCBI Taxonomy" id="288681"/>
    <lineage>
        <taxon>Bacteria</taxon>
        <taxon>Bacillati</taxon>
        <taxon>Bacillota</taxon>
        <taxon>Bacilli</taxon>
        <taxon>Bacillales</taxon>
        <taxon>Bacillaceae</taxon>
        <taxon>Bacillus</taxon>
        <taxon>Bacillus cereus group</taxon>
    </lineage>
</organism>
<feature type="chain" id="PRO_0000270238" description="Methionine import ATP-binding protein MetN 1">
    <location>
        <begin position="1"/>
        <end position="346"/>
    </location>
</feature>
<feature type="domain" description="ABC transporter" evidence="1">
    <location>
        <begin position="2"/>
        <end position="241"/>
    </location>
</feature>
<feature type="binding site" evidence="1">
    <location>
        <begin position="38"/>
        <end position="45"/>
    </location>
    <ligand>
        <name>ATP</name>
        <dbReference type="ChEBI" id="CHEBI:30616"/>
    </ligand>
</feature>
<keyword id="KW-0029">Amino-acid transport</keyword>
<keyword id="KW-0067">ATP-binding</keyword>
<keyword id="KW-1003">Cell membrane</keyword>
<keyword id="KW-0472">Membrane</keyword>
<keyword id="KW-0547">Nucleotide-binding</keyword>
<keyword id="KW-1278">Translocase</keyword>
<keyword id="KW-0813">Transport</keyword>
<reference key="1">
    <citation type="journal article" date="2006" name="J. Bacteriol.">
        <title>Pathogenomic sequence analysis of Bacillus cereus and Bacillus thuringiensis isolates closely related to Bacillus anthracis.</title>
        <authorList>
            <person name="Han C.S."/>
            <person name="Xie G."/>
            <person name="Challacombe J.F."/>
            <person name="Altherr M.R."/>
            <person name="Bhotika S.S."/>
            <person name="Bruce D."/>
            <person name="Campbell C.S."/>
            <person name="Campbell M.L."/>
            <person name="Chen J."/>
            <person name="Chertkov O."/>
            <person name="Cleland C."/>
            <person name="Dimitrijevic M."/>
            <person name="Doggett N.A."/>
            <person name="Fawcett J.J."/>
            <person name="Glavina T."/>
            <person name="Goodwin L.A."/>
            <person name="Hill K.K."/>
            <person name="Hitchcock P."/>
            <person name="Jackson P.J."/>
            <person name="Keim P."/>
            <person name="Kewalramani A.R."/>
            <person name="Longmire J."/>
            <person name="Lucas S."/>
            <person name="Malfatti S."/>
            <person name="McMurry K."/>
            <person name="Meincke L.J."/>
            <person name="Misra M."/>
            <person name="Moseman B.L."/>
            <person name="Mundt M."/>
            <person name="Munk A.C."/>
            <person name="Okinaka R.T."/>
            <person name="Parson-Quintana B."/>
            <person name="Reilly L.P."/>
            <person name="Richardson P."/>
            <person name="Robinson D.L."/>
            <person name="Rubin E."/>
            <person name="Saunders E."/>
            <person name="Tapia R."/>
            <person name="Tesmer J.G."/>
            <person name="Thayer N."/>
            <person name="Thompson L.S."/>
            <person name="Tice H."/>
            <person name="Ticknor L.O."/>
            <person name="Wills P.L."/>
            <person name="Brettin T.S."/>
            <person name="Gilna P."/>
        </authorList>
    </citation>
    <scope>NUCLEOTIDE SEQUENCE [LARGE SCALE GENOMIC DNA]</scope>
    <source>
        <strain>ZK / E33L</strain>
    </source>
</reference>
<dbReference type="EC" id="7.4.2.11" evidence="1"/>
<dbReference type="EMBL" id="CP000001">
    <property type="protein sequence ID" value="AAU20066.1"/>
    <property type="molecule type" value="Genomic_DNA"/>
</dbReference>
<dbReference type="RefSeq" id="WP_000571354.1">
    <property type="nucleotide sequence ID" value="NC_006274.1"/>
</dbReference>
<dbReference type="SMR" id="Q63H29"/>
<dbReference type="KEGG" id="bcz:BCE33L0166"/>
<dbReference type="PATRIC" id="fig|288681.22.peg.5463"/>
<dbReference type="Proteomes" id="UP000002612">
    <property type="component" value="Chromosome"/>
</dbReference>
<dbReference type="GO" id="GO:0005886">
    <property type="term" value="C:plasma membrane"/>
    <property type="evidence" value="ECO:0007669"/>
    <property type="project" value="UniProtKB-SubCell"/>
</dbReference>
<dbReference type="GO" id="GO:0033232">
    <property type="term" value="F:ABC-type D-methionine transporter activity"/>
    <property type="evidence" value="ECO:0007669"/>
    <property type="project" value="UniProtKB-EC"/>
</dbReference>
<dbReference type="GO" id="GO:0005524">
    <property type="term" value="F:ATP binding"/>
    <property type="evidence" value="ECO:0007669"/>
    <property type="project" value="UniProtKB-KW"/>
</dbReference>
<dbReference type="GO" id="GO:0016887">
    <property type="term" value="F:ATP hydrolysis activity"/>
    <property type="evidence" value="ECO:0007669"/>
    <property type="project" value="InterPro"/>
</dbReference>
<dbReference type="CDD" id="cd03258">
    <property type="entry name" value="ABC_MetN_methionine_transporter"/>
    <property type="match status" value="1"/>
</dbReference>
<dbReference type="FunFam" id="3.40.50.300:FF:000233">
    <property type="entry name" value="Methionine import ATP-binding protein MetN"/>
    <property type="match status" value="1"/>
</dbReference>
<dbReference type="Gene3D" id="3.30.70.260">
    <property type="match status" value="1"/>
</dbReference>
<dbReference type="Gene3D" id="3.40.50.300">
    <property type="entry name" value="P-loop containing nucleotide triphosphate hydrolases"/>
    <property type="match status" value="1"/>
</dbReference>
<dbReference type="InterPro" id="IPR003593">
    <property type="entry name" value="AAA+_ATPase"/>
</dbReference>
<dbReference type="InterPro" id="IPR003439">
    <property type="entry name" value="ABC_transporter-like_ATP-bd"/>
</dbReference>
<dbReference type="InterPro" id="IPR017871">
    <property type="entry name" value="ABC_transporter-like_CS"/>
</dbReference>
<dbReference type="InterPro" id="IPR045865">
    <property type="entry name" value="ACT-like_dom_sf"/>
</dbReference>
<dbReference type="InterPro" id="IPR041701">
    <property type="entry name" value="MetN_ABC"/>
</dbReference>
<dbReference type="InterPro" id="IPR050086">
    <property type="entry name" value="MetN_ABC_transporter-like"/>
</dbReference>
<dbReference type="InterPro" id="IPR018449">
    <property type="entry name" value="NIL_domain"/>
</dbReference>
<dbReference type="InterPro" id="IPR027417">
    <property type="entry name" value="P-loop_NTPase"/>
</dbReference>
<dbReference type="PANTHER" id="PTHR43166">
    <property type="entry name" value="AMINO ACID IMPORT ATP-BINDING PROTEIN"/>
    <property type="match status" value="1"/>
</dbReference>
<dbReference type="PANTHER" id="PTHR43166:SF30">
    <property type="entry name" value="METHIONINE IMPORT ATP-BINDING PROTEIN METN"/>
    <property type="match status" value="1"/>
</dbReference>
<dbReference type="Pfam" id="PF00005">
    <property type="entry name" value="ABC_tran"/>
    <property type="match status" value="1"/>
</dbReference>
<dbReference type="Pfam" id="PF09383">
    <property type="entry name" value="NIL"/>
    <property type="match status" value="1"/>
</dbReference>
<dbReference type="SMART" id="SM00382">
    <property type="entry name" value="AAA"/>
    <property type="match status" value="1"/>
</dbReference>
<dbReference type="SMART" id="SM00930">
    <property type="entry name" value="NIL"/>
    <property type="match status" value="1"/>
</dbReference>
<dbReference type="SUPFAM" id="SSF55021">
    <property type="entry name" value="ACT-like"/>
    <property type="match status" value="1"/>
</dbReference>
<dbReference type="SUPFAM" id="SSF52540">
    <property type="entry name" value="P-loop containing nucleoside triphosphate hydrolases"/>
    <property type="match status" value="1"/>
</dbReference>
<dbReference type="PROSITE" id="PS00211">
    <property type="entry name" value="ABC_TRANSPORTER_1"/>
    <property type="match status" value="1"/>
</dbReference>
<dbReference type="PROSITE" id="PS50893">
    <property type="entry name" value="ABC_TRANSPORTER_2"/>
    <property type="match status" value="1"/>
</dbReference>
<dbReference type="PROSITE" id="PS51264">
    <property type="entry name" value="METN"/>
    <property type="match status" value="1"/>
</dbReference>
<comment type="function">
    <text evidence="1">Part of the ABC transporter complex MetNIQ involved in methionine import. Responsible for energy coupling to the transport system.</text>
</comment>
<comment type="catalytic activity">
    <reaction evidence="1">
        <text>L-methionine(out) + ATP + H2O = L-methionine(in) + ADP + phosphate + H(+)</text>
        <dbReference type="Rhea" id="RHEA:29779"/>
        <dbReference type="ChEBI" id="CHEBI:15377"/>
        <dbReference type="ChEBI" id="CHEBI:15378"/>
        <dbReference type="ChEBI" id="CHEBI:30616"/>
        <dbReference type="ChEBI" id="CHEBI:43474"/>
        <dbReference type="ChEBI" id="CHEBI:57844"/>
        <dbReference type="ChEBI" id="CHEBI:456216"/>
        <dbReference type="EC" id="7.4.2.11"/>
    </reaction>
</comment>
<comment type="catalytic activity">
    <reaction evidence="1">
        <text>D-methionine(out) + ATP + H2O = D-methionine(in) + ADP + phosphate + H(+)</text>
        <dbReference type="Rhea" id="RHEA:29767"/>
        <dbReference type="ChEBI" id="CHEBI:15377"/>
        <dbReference type="ChEBI" id="CHEBI:15378"/>
        <dbReference type="ChEBI" id="CHEBI:30616"/>
        <dbReference type="ChEBI" id="CHEBI:43474"/>
        <dbReference type="ChEBI" id="CHEBI:57932"/>
        <dbReference type="ChEBI" id="CHEBI:456216"/>
        <dbReference type="EC" id="7.4.2.11"/>
    </reaction>
</comment>
<comment type="subunit">
    <text evidence="1">The complex is composed of two ATP-binding proteins (MetN), two transmembrane proteins (MetI) and a solute-binding protein (MetQ).</text>
</comment>
<comment type="subcellular location">
    <subcellularLocation>
        <location evidence="1">Cell membrane</location>
        <topology evidence="1">Peripheral membrane protein</topology>
    </subcellularLocation>
</comment>
<comment type="similarity">
    <text evidence="1">Belongs to the ABC transporter superfamily. Methionine importer (TC 3.A.1.24) family.</text>
</comment>
<gene>
    <name evidence="1" type="primary">metN1</name>
    <name type="ordered locus">BCE33L0166</name>
</gene>
<evidence type="ECO:0000255" key="1">
    <source>
        <dbReference type="HAMAP-Rule" id="MF_01719"/>
    </source>
</evidence>
<accession>Q63H29</accession>